<evidence type="ECO:0000255" key="1">
    <source>
        <dbReference type="HAMAP-Rule" id="MF_00275"/>
    </source>
</evidence>
<feature type="chain" id="PRO_1000059209" description="Potassium-transporting ATPase potassium-binding subunit">
    <location>
        <begin position="1"/>
        <end position="557"/>
    </location>
</feature>
<feature type="transmembrane region" description="Helical" evidence="1">
    <location>
        <begin position="5"/>
        <end position="25"/>
    </location>
</feature>
<feature type="transmembrane region" description="Helical" evidence="1">
    <location>
        <begin position="63"/>
        <end position="83"/>
    </location>
</feature>
<feature type="transmembrane region" description="Helical" evidence="1">
    <location>
        <begin position="132"/>
        <end position="152"/>
    </location>
</feature>
<feature type="transmembrane region" description="Helical" evidence="1">
    <location>
        <begin position="170"/>
        <end position="190"/>
    </location>
</feature>
<feature type="transmembrane region" description="Helical" evidence="1">
    <location>
        <begin position="253"/>
        <end position="273"/>
    </location>
</feature>
<feature type="transmembrane region" description="Helical" evidence="1">
    <location>
        <begin position="283"/>
        <end position="303"/>
    </location>
</feature>
<feature type="transmembrane region" description="Helical" evidence="1">
    <location>
        <begin position="329"/>
        <end position="349"/>
    </location>
</feature>
<feature type="transmembrane region" description="Helical" evidence="1">
    <location>
        <begin position="356"/>
        <end position="376"/>
    </location>
</feature>
<feature type="transmembrane region" description="Helical" evidence="1">
    <location>
        <begin position="379"/>
        <end position="399"/>
    </location>
</feature>
<feature type="transmembrane region" description="Helical" evidence="1">
    <location>
        <begin position="416"/>
        <end position="436"/>
    </location>
</feature>
<feature type="transmembrane region" description="Helical" evidence="1">
    <location>
        <begin position="484"/>
        <end position="504"/>
    </location>
</feature>
<feature type="transmembrane region" description="Helical" evidence="1">
    <location>
        <begin position="526"/>
        <end position="546"/>
    </location>
</feature>
<name>KDPA_ECO24</name>
<accession>A7ZJ81</accession>
<sequence>MAAQGFLLIATFLLVLMVLARPLGSGLARLINDIPLPGTAGVERILFRLPGVSDHEMNWKQYLCAILGLNMLGLAVLFFMLLGQHYLPLNPQQLPGLSWDLALNTAVSFVTNTNWQSYSGETTLSYFSQMAGLTVQNFLSAASGIAVIFALIRAFTRQSMSTLGNAWVDLLRITLWVLVPVALLIALFFIQQGALQNFQPYQAVNTVEGAQQLLPMGPVASQEAIKMLGTNGGGFFNANSSHPFENPTALTNFVQMLAIFLIPTALCFAFGEVTGDRRQGRMLLWAMSVIFVICVGVVMWAEVQGNPHLLALGADSSINMEGKESRFGVLVSSLFAVVTTAASCGAVIAMHDSFTALGGMVPMWLMQIGEVVFGGVGSGLYGMMLFVLLAVFIAGLMIGRTPEYLGKKIDVREMKLTALAILVTPTLVLMGAALAMMTDAGRSAMLNPGPHGFSEVLYAVSSAANNNGSAFAGLSANSPFWNCLLAFCMFVGRFGVIIPVMAIAGSLVSKKSQPASSGTLPTHGPLFVGLLIGTVLLVGALTFIPALALGPVAEYLS</sequence>
<organism>
    <name type="scientific">Escherichia coli O139:H28 (strain E24377A / ETEC)</name>
    <dbReference type="NCBI Taxonomy" id="331111"/>
    <lineage>
        <taxon>Bacteria</taxon>
        <taxon>Pseudomonadati</taxon>
        <taxon>Pseudomonadota</taxon>
        <taxon>Gammaproteobacteria</taxon>
        <taxon>Enterobacterales</taxon>
        <taxon>Enterobacteriaceae</taxon>
        <taxon>Escherichia</taxon>
    </lineage>
</organism>
<comment type="function">
    <text evidence="1">Part of the high-affinity ATP-driven potassium transport (or Kdp) system, which catalyzes the hydrolysis of ATP coupled with the electrogenic transport of potassium into the cytoplasm. This subunit binds the periplasmic potassium ions and delivers the ions to the membrane domain of KdpB through an intramembrane tunnel.</text>
</comment>
<comment type="subunit">
    <text evidence="1">The system is composed of three essential subunits: KdpA, KdpB and KdpC.</text>
</comment>
<comment type="subcellular location">
    <subcellularLocation>
        <location evidence="1">Cell inner membrane</location>
        <topology evidence="1">Multi-pass membrane protein</topology>
    </subcellularLocation>
</comment>
<comment type="similarity">
    <text evidence="1">Belongs to the KdpA family.</text>
</comment>
<gene>
    <name evidence="1" type="primary">kdpA</name>
    <name type="ordered locus">EcE24377A_0724</name>
</gene>
<dbReference type="EMBL" id="CP000800">
    <property type="protein sequence ID" value="ABV20190.1"/>
    <property type="molecule type" value="Genomic_DNA"/>
</dbReference>
<dbReference type="RefSeq" id="WP_000741112.1">
    <property type="nucleotide sequence ID" value="NC_009801.1"/>
</dbReference>
<dbReference type="SMR" id="A7ZJ81"/>
<dbReference type="GeneID" id="75204949"/>
<dbReference type="KEGG" id="ecw:EcE24377A_0724"/>
<dbReference type="HOGENOM" id="CLU_018614_3_0_6"/>
<dbReference type="Proteomes" id="UP000001122">
    <property type="component" value="Chromosome"/>
</dbReference>
<dbReference type="GO" id="GO:0005886">
    <property type="term" value="C:plasma membrane"/>
    <property type="evidence" value="ECO:0007669"/>
    <property type="project" value="UniProtKB-SubCell"/>
</dbReference>
<dbReference type="GO" id="GO:0008556">
    <property type="term" value="F:P-type potassium transmembrane transporter activity"/>
    <property type="evidence" value="ECO:0007669"/>
    <property type="project" value="InterPro"/>
</dbReference>
<dbReference type="GO" id="GO:0030955">
    <property type="term" value="F:potassium ion binding"/>
    <property type="evidence" value="ECO:0007669"/>
    <property type="project" value="UniProtKB-UniRule"/>
</dbReference>
<dbReference type="HAMAP" id="MF_00275">
    <property type="entry name" value="KdpA"/>
    <property type="match status" value="1"/>
</dbReference>
<dbReference type="InterPro" id="IPR004623">
    <property type="entry name" value="KdpA"/>
</dbReference>
<dbReference type="NCBIfam" id="TIGR00680">
    <property type="entry name" value="kdpA"/>
    <property type="match status" value="1"/>
</dbReference>
<dbReference type="PANTHER" id="PTHR30607">
    <property type="entry name" value="POTASSIUM-TRANSPORTING ATPASE A CHAIN"/>
    <property type="match status" value="1"/>
</dbReference>
<dbReference type="PANTHER" id="PTHR30607:SF2">
    <property type="entry name" value="POTASSIUM-TRANSPORTING ATPASE POTASSIUM-BINDING SUBUNIT"/>
    <property type="match status" value="1"/>
</dbReference>
<dbReference type="Pfam" id="PF03814">
    <property type="entry name" value="KdpA"/>
    <property type="match status" value="1"/>
</dbReference>
<dbReference type="PIRSF" id="PIRSF001294">
    <property type="entry name" value="K_ATPaseA"/>
    <property type="match status" value="1"/>
</dbReference>
<proteinExistence type="inferred from homology"/>
<keyword id="KW-0997">Cell inner membrane</keyword>
<keyword id="KW-1003">Cell membrane</keyword>
<keyword id="KW-0406">Ion transport</keyword>
<keyword id="KW-0472">Membrane</keyword>
<keyword id="KW-0630">Potassium</keyword>
<keyword id="KW-0633">Potassium transport</keyword>
<keyword id="KW-1185">Reference proteome</keyword>
<keyword id="KW-0812">Transmembrane</keyword>
<keyword id="KW-1133">Transmembrane helix</keyword>
<keyword id="KW-0813">Transport</keyword>
<reference key="1">
    <citation type="journal article" date="2008" name="J. Bacteriol.">
        <title>The pangenome structure of Escherichia coli: comparative genomic analysis of E. coli commensal and pathogenic isolates.</title>
        <authorList>
            <person name="Rasko D.A."/>
            <person name="Rosovitz M.J."/>
            <person name="Myers G.S.A."/>
            <person name="Mongodin E.F."/>
            <person name="Fricke W.F."/>
            <person name="Gajer P."/>
            <person name="Crabtree J."/>
            <person name="Sebaihia M."/>
            <person name="Thomson N.R."/>
            <person name="Chaudhuri R."/>
            <person name="Henderson I.R."/>
            <person name="Sperandio V."/>
            <person name="Ravel J."/>
        </authorList>
    </citation>
    <scope>NUCLEOTIDE SEQUENCE [LARGE SCALE GENOMIC DNA]</scope>
    <source>
        <strain>E24377A / ETEC</strain>
    </source>
</reference>
<protein>
    <recommendedName>
        <fullName evidence="1">Potassium-transporting ATPase potassium-binding subunit</fullName>
    </recommendedName>
    <alternativeName>
        <fullName evidence="1">ATP phosphohydrolase [potassium-transporting] A chain</fullName>
    </alternativeName>
    <alternativeName>
        <fullName evidence="1">Potassium-binding and translocating subunit A</fullName>
    </alternativeName>
    <alternativeName>
        <fullName evidence="1">Potassium-translocating ATPase A chain</fullName>
    </alternativeName>
</protein>